<evidence type="ECO:0000255" key="1">
    <source>
        <dbReference type="HAMAP-Rule" id="MF_01326"/>
    </source>
</evidence>
<evidence type="ECO:0000305" key="2"/>
<accession>P14034</accession>
<comment type="function">
    <text evidence="1">One of two assembly initiator proteins, it binds directly to the 5'-end of the 23S rRNA, where it nucleates assembly of the 50S subunit.</text>
</comment>
<comment type="function">
    <text evidence="1">Located at the polypeptide exit tunnel on the outside of the subunit.</text>
</comment>
<comment type="subunit">
    <text evidence="1">Part of the 50S ribosomal subunit.</text>
</comment>
<comment type="similarity">
    <text evidence="1">Belongs to the universal ribosomal protein uL24 family.</text>
</comment>
<sequence>MVLTNSKQPRKQRKALYNAPLHLRNSVMSAMLSKALKEKYGKNALPVKKGDTVKVLRGSFKGIEGEVSKVNYSGYKIIVEGVVNKKQDGKETPYPIHPSNVMITKMEDSDEKRFKTSNK</sequence>
<keyword id="KW-0687">Ribonucleoprotein</keyword>
<keyword id="KW-0689">Ribosomal protein</keyword>
<keyword id="KW-0694">RNA-binding</keyword>
<keyword id="KW-0699">rRNA-binding</keyword>
<proteinExistence type="inferred from homology"/>
<feature type="chain" id="PRO_0000130773" description="Large ribosomal subunit protein uL24">
    <location>
        <begin position="1"/>
        <end position="119"/>
    </location>
</feature>
<dbReference type="EMBL" id="X16720">
    <property type="protein sequence ID" value="CAA34691.1"/>
    <property type="molecule type" value="Genomic_DNA"/>
</dbReference>
<dbReference type="PIR" id="S05615">
    <property type="entry name" value="R5MX24"/>
</dbReference>
<dbReference type="SMR" id="P14034"/>
<dbReference type="OMA" id="VRIMRGD"/>
<dbReference type="GO" id="GO:0015934">
    <property type="term" value="C:large ribosomal subunit"/>
    <property type="evidence" value="ECO:0007669"/>
    <property type="project" value="InterPro"/>
</dbReference>
<dbReference type="GO" id="GO:0019843">
    <property type="term" value="F:rRNA binding"/>
    <property type="evidence" value="ECO:0007669"/>
    <property type="project" value="UniProtKB-UniRule"/>
</dbReference>
<dbReference type="GO" id="GO:0003735">
    <property type="term" value="F:structural constituent of ribosome"/>
    <property type="evidence" value="ECO:0007669"/>
    <property type="project" value="InterPro"/>
</dbReference>
<dbReference type="GO" id="GO:0006412">
    <property type="term" value="P:translation"/>
    <property type="evidence" value="ECO:0007669"/>
    <property type="project" value="UniProtKB-UniRule"/>
</dbReference>
<dbReference type="CDD" id="cd06089">
    <property type="entry name" value="KOW_RPL26"/>
    <property type="match status" value="1"/>
</dbReference>
<dbReference type="Gene3D" id="2.30.30.30">
    <property type="match status" value="1"/>
</dbReference>
<dbReference type="HAMAP" id="MF_01326_A">
    <property type="entry name" value="Ribosomal_uL24_A"/>
    <property type="match status" value="1"/>
</dbReference>
<dbReference type="InterPro" id="IPR005824">
    <property type="entry name" value="KOW"/>
</dbReference>
<dbReference type="InterPro" id="IPR014722">
    <property type="entry name" value="Rib_uL2_dom2"/>
</dbReference>
<dbReference type="InterPro" id="IPR005825">
    <property type="entry name" value="Ribosomal_uL24_CS"/>
</dbReference>
<dbReference type="InterPro" id="IPR005756">
    <property type="entry name" value="Ribosomal_uL24_euk/arc"/>
</dbReference>
<dbReference type="InterPro" id="IPR041988">
    <property type="entry name" value="Ribosomal_uL24_KOW"/>
</dbReference>
<dbReference type="InterPro" id="IPR008991">
    <property type="entry name" value="Translation_prot_SH3-like_sf"/>
</dbReference>
<dbReference type="NCBIfam" id="TIGR01080">
    <property type="entry name" value="rplX_A_E"/>
    <property type="match status" value="1"/>
</dbReference>
<dbReference type="PANTHER" id="PTHR11143">
    <property type="entry name" value="60S RIBOSOMAL PROTEIN L26 FAMILY MEMBER"/>
    <property type="match status" value="1"/>
</dbReference>
<dbReference type="Pfam" id="PF00467">
    <property type="entry name" value="KOW"/>
    <property type="match status" value="1"/>
</dbReference>
<dbReference type="Pfam" id="PF16906">
    <property type="entry name" value="Ribosomal_L26"/>
    <property type="match status" value="1"/>
</dbReference>
<dbReference type="SMART" id="SM00739">
    <property type="entry name" value="KOW"/>
    <property type="match status" value="1"/>
</dbReference>
<dbReference type="SUPFAM" id="SSF50104">
    <property type="entry name" value="Translation proteins SH3-like domain"/>
    <property type="match status" value="1"/>
</dbReference>
<dbReference type="PROSITE" id="PS01108">
    <property type="entry name" value="RIBOSOMAL_L24"/>
    <property type="match status" value="1"/>
</dbReference>
<reference key="1">
    <citation type="journal article" date="1989" name="J. Mol. Biol.">
        <title>Organization and structure of the Methanococcus transcriptional unit homologous to the Escherichia coli 'spectinomycin operon'. Implications for the evolutionary relationship of 70 S and 80 S ribosomes.</title>
        <authorList>
            <person name="Auer J."/>
            <person name="Spicker G."/>
            <person name="Boeck A."/>
        </authorList>
    </citation>
    <scope>NUCLEOTIDE SEQUENCE [GENOMIC DNA]</scope>
</reference>
<organism>
    <name type="scientific">Methanococcus vannielii</name>
    <dbReference type="NCBI Taxonomy" id="2187"/>
    <lineage>
        <taxon>Archaea</taxon>
        <taxon>Methanobacteriati</taxon>
        <taxon>Methanobacteriota</taxon>
        <taxon>Methanomada group</taxon>
        <taxon>Methanococci</taxon>
        <taxon>Methanococcales</taxon>
        <taxon>Methanococcaceae</taxon>
        <taxon>Methanococcus</taxon>
    </lineage>
</organism>
<protein>
    <recommendedName>
        <fullName evidence="1">Large ribosomal subunit protein uL24</fullName>
    </recommendedName>
    <alternativeName>
        <fullName evidence="2">50S ribosomal protein L24</fullName>
    </alternativeName>
</protein>
<name>RL24_METVA</name>
<gene>
    <name evidence="1" type="primary">rpl24</name>
</gene>